<name>KXDL1_XENTR</name>
<keyword id="KW-0458">Lysosome</keyword>
<keyword id="KW-0472">Membrane</keyword>
<keyword id="KW-1185">Reference proteome</keyword>
<reference key="1">
    <citation type="submission" date="2006-08" db="EMBL/GenBank/DDBJ databases">
        <authorList>
            <consortium name="NIH - Xenopus Gene Collection (XGC) project"/>
        </authorList>
    </citation>
    <scope>NUCLEOTIDE SEQUENCE [LARGE SCALE MRNA]</scope>
    <source>
        <strain>N6</strain>
        <tissue>Oviduct</tissue>
    </source>
</reference>
<feature type="chain" id="PRO_0000295264" description="KxDL motif-containing protein 1">
    <location>
        <begin position="1"/>
        <end position="180"/>
    </location>
</feature>
<feature type="region of interest" description="Disordered" evidence="3">
    <location>
        <begin position="126"/>
        <end position="180"/>
    </location>
</feature>
<feature type="compositionally biased region" description="Polar residues" evidence="3">
    <location>
        <begin position="126"/>
        <end position="144"/>
    </location>
</feature>
<feature type="compositionally biased region" description="Polar residues" evidence="3">
    <location>
        <begin position="158"/>
        <end position="170"/>
    </location>
</feature>
<organism>
    <name type="scientific">Xenopus tropicalis</name>
    <name type="common">Western clawed frog</name>
    <name type="synonym">Silurana tropicalis</name>
    <dbReference type="NCBI Taxonomy" id="8364"/>
    <lineage>
        <taxon>Eukaryota</taxon>
        <taxon>Metazoa</taxon>
        <taxon>Chordata</taxon>
        <taxon>Craniata</taxon>
        <taxon>Vertebrata</taxon>
        <taxon>Euteleostomi</taxon>
        <taxon>Amphibia</taxon>
        <taxon>Batrachia</taxon>
        <taxon>Anura</taxon>
        <taxon>Pipoidea</taxon>
        <taxon>Pipidae</taxon>
        <taxon>Xenopodinae</taxon>
        <taxon>Xenopus</taxon>
        <taxon>Silurana</taxon>
    </lineage>
</organism>
<dbReference type="EMBL" id="BC121634">
    <property type="protein sequence ID" value="AAI21635.1"/>
    <property type="status" value="ALT_INIT"/>
    <property type="molecule type" value="mRNA"/>
</dbReference>
<dbReference type="RefSeq" id="XP_031762075.1">
    <property type="nucleotide sequence ID" value="XM_031906215.1"/>
</dbReference>
<dbReference type="SMR" id="Q0V9C8"/>
<dbReference type="FunCoup" id="Q0V9C8">
    <property type="interactions" value="132"/>
</dbReference>
<dbReference type="STRING" id="8364.ENSXETP00000030715"/>
<dbReference type="PaxDb" id="8364-ENSXETP00000050161"/>
<dbReference type="GeneID" id="779482"/>
<dbReference type="AGR" id="Xenbase:XB-GENE-5898620"/>
<dbReference type="Xenbase" id="XB-GENE-5898620">
    <property type="gene designation" value="kxd1"/>
</dbReference>
<dbReference type="eggNOG" id="KOG3443">
    <property type="taxonomic scope" value="Eukaryota"/>
</dbReference>
<dbReference type="HOGENOM" id="CLU_094353_3_0_1"/>
<dbReference type="InParanoid" id="Q0V9C8"/>
<dbReference type="TreeFam" id="TF319035"/>
<dbReference type="Proteomes" id="UP000008143">
    <property type="component" value="Chromosome 1"/>
</dbReference>
<dbReference type="Bgee" id="ENSXETG00000023203">
    <property type="expression patterns" value="Expressed in egg cell and 10 other cell types or tissues"/>
</dbReference>
<dbReference type="GO" id="GO:0099078">
    <property type="term" value="C:BORC complex"/>
    <property type="evidence" value="ECO:0000250"/>
    <property type="project" value="UniProtKB"/>
</dbReference>
<dbReference type="GO" id="GO:0005765">
    <property type="term" value="C:lysosomal membrane"/>
    <property type="evidence" value="ECO:0007669"/>
    <property type="project" value="UniProtKB-SubCell"/>
</dbReference>
<dbReference type="GO" id="GO:0032418">
    <property type="term" value="P:lysosome localization"/>
    <property type="evidence" value="ECO:0000250"/>
    <property type="project" value="UniProtKB"/>
</dbReference>
<dbReference type="GO" id="GO:0016192">
    <property type="term" value="P:vesicle-mediated transport"/>
    <property type="evidence" value="ECO:0000250"/>
    <property type="project" value="UniProtKB"/>
</dbReference>
<dbReference type="InterPro" id="IPR039843">
    <property type="entry name" value="KXD1-like"/>
</dbReference>
<dbReference type="InterPro" id="IPR019371">
    <property type="entry name" value="KxDL_dom"/>
</dbReference>
<dbReference type="PANTHER" id="PTHR13511">
    <property type="entry name" value="KXDL MOTIF-CONTAINING PROTEIN 1"/>
    <property type="match status" value="1"/>
</dbReference>
<dbReference type="PANTHER" id="PTHR13511:SF0">
    <property type="entry name" value="KXDL MOTIF-CONTAINING PROTEIN 1"/>
    <property type="match status" value="1"/>
</dbReference>
<dbReference type="Pfam" id="PF10241">
    <property type="entry name" value="KxDL"/>
    <property type="match status" value="1"/>
</dbReference>
<protein>
    <recommendedName>
        <fullName>KxDL motif-containing protein 1</fullName>
    </recommendedName>
</protein>
<sequence length="180" mass="20266">MAEQVTEATASGVFCSRILNMVNSEDVNAIILAQRHMLDRFEKTNEMLLNFNGLSNTRLQQMSDRFAHHTRTLVEMKKDLDIIFRRIRMLKGKLAKQYPESFNNVHESPILEDDDDFDPTPRSAATTIATSEQSTESCDTSPSIISPAMSQDFEDLSQAPSDTPSVNGQILTDEEVVHED</sequence>
<accession>Q0V9C8</accession>
<evidence type="ECO:0000250" key="1">
    <source>
        <dbReference type="UniProtKB" id="Q80XH1"/>
    </source>
</evidence>
<evidence type="ECO:0000250" key="2">
    <source>
        <dbReference type="UniProtKB" id="Q9BQD3"/>
    </source>
</evidence>
<evidence type="ECO:0000256" key="3">
    <source>
        <dbReference type="SAM" id="MobiDB-lite"/>
    </source>
</evidence>
<evidence type="ECO:0000305" key="4"/>
<gene>
    <name type="primary">kxd1</name>
</gene>
<proteinExistence type="evidence at transcript level"/>
<comment type="function">
    <text evidence="1 2">As part of a BORC-like complex may play a role in lysosomes movement and localization at the cell periphery. Associated with the cytosolic face of lysosomes, this complex may couple lysosomes to microtubule plus-end-directed kinesin motor. May also be involved in the biogenesis of lysosome-related organelles such as melanosomes.</text>
</comment>
<comment type="subunit">
    <text evidence="1">Associates with the BLOC-1 complex.</text>
</comment>
<comment type="subcellular location">
    <subcellularLocation>
        <location evidence="2">Lysosome membrane</location>
    </subcellularLocation>
</comment>
<comment type="similarity">
    <text evidence="4">Belongs to the KXD1 family.</text>
</comment>
<comment type="sequence caution" evidence="4">
    <conflict type="erroneous initiation">
        <sequence resource="EMBL-CDS" id="AAI21635"/>
    </conflict>
    <text>Extended N-terminus.</text>
</comment>